<feature type="chain" id="PRO_1000123493" description="Lipoprotein signal peptidase">
    <location>
        <begin position="1"/>
        <end position="173"/>
    </location>
</feature>
<feature type="transmembrane region" description="Helical" evidence="1">
    <location>
        <begin position="7"/>
        <end position="27"/>
    </location>
</feature>
<feature type="transmembrane region" description="Helical" evidence="1">
    <location>
        <begin position="41"/>
        <end position="61"/>
    </location>
</feature>
<feature type="transmembrane region" description="Helical" evidence="1">
    <location>
        <begin position="70"/>
        <end position="90"/>
    </location>
</feature>
<feature type="transmembrane region" description="Helical" evidence="1">
    <location>
        <begin position="95"/>
        <end position="115"/>
    </location>
</feature>
<feature type="transmembrane region" description="Helical" evidence="1">
    <location>
        <begin position="130"/>
        <end position="150"/>
    </location>
</feature>
<feature type="active site" evidence="1">
    <location>
        <position position="119"/>
    </location>
</feature>
<feature type="active site" evidence="1">
    <location>
        <position position="135"/>
    </location>
</feature>
<reference key="1">
    <citation type="journal article" date="2011" name="MBio">
        <title>Novel metabolic attributes of the genus Cyanothece, comprising a group of unicellular nitrogen-fixing Cyanobacteria.</title>
        <authorList>
            <person name="Bandyopadhyay A."/>
            <person name="Elvitigala T."/>
            <person name="Welsh E."/>
            <person name="Stockel J."/>
            <person name="Liberton M."/>
            <person name="Min H."/>
            <person name="Sherman L.A."/>
            <person name="Pakrasi H.B."/>
        </authorList>
    </citation>
    <scope>NUCLEOTIDE SEQUENCE [LARGE SCALE GENOMIC DNA]</scope>
    <source>
        <strain>PCC 7425 / ATCC 29141</strain>
    </source>
</reference>
<protein>
    <recommendedName>
        <fullName evidence="1">Lipoprotein signal peptidase</fullName>
        <ecNumber evidence="1">3.4.23.36</ecNumber>
    </recommendedName>
    <alternativeName>
        <fullName evidence="1">Prolipoprotein signal peptidase</fullName>
    </alternativeName>
    <alternativeName>
        <fullName evidence="1">Signal peptidase II</fullName>
        <shortName evidence="1">SPase II</shortName>
    </alternativeName>
</protein>
<dbReference type="EC" id="3.4.23.36" evidence="1"/>
<dbReference type="EMBL" id="CP001344">
    <property type="protein sequence ID" value="ACL46506.1"/>
    <property type="molecule type" value="Genomic_DNA"/>
</dbReference>
<dbReference type="SMR" id="B8HXG1"/>
<dbReference type="STRING" id="395961.Cyan7425_4193"/>
<dbReference type="KEGG" id="cyn:Cyan7425_4193"/>
<dbReference type="eggNOG" id="COG0597">
    <property type="taxonomic scope" value="Bacteria"/>
</dbReference>
<dbReference type="HOGENOM" id="CLU_083252_3_2_3"/>
<dbReference type="OrthoDB" id="9810259at2"/>
<dbReference type="UniPathway" id="UPA00665"/>
<dbReference type="GO" id="GO:0005886">
    <property type="term" value="C:plasma membrane"/>
    <property type="evidence" value="ECO:0007669"/>
    <property type="project" value="UniProtKB-SubCell"/>
</dbReference>
<dbReference type="GO" id="GO:0004190">
    <property type="term" value="F:aspartic-type endopeptidase activity"/>
    <property type="evidence" value="ECO:0007669"/>
    <property type="project" value="UniProtKB-UniRule"/>
</dbReference>
<dbReference type="GO" id="GO:0006508">
    <property type="term" value="P:proteolysis"/>
    <property type="evidence" value="ECO:0007669"/>
    <property type="project" value="UniProtKB-KW"/>
</dbReference>
<dbReference type="HAMAP" id="MF_00161">
    <property type="entry name" value="LspA"/>
    <property type="match status" value="1"/>
</dbReference>
<dbReference type="InterPro" id="IPR001872">
    <property type="entry name" value="Peptidase_A8"/>
</dbReference>
<dbReference type="NCBIfam" id="TIGR00077">
    <property type="entry name" value="lspA"/>
    <property type="match status" value="1"/>
</dbReference>
<dbReference type="PANTHER" id="PTHR33695">
    <property type="entry name" value="LIPOPROTEIN SIGNAL PEPTIDASE"/>
    <property type="match status" value="1"/>
</dbReference>
<dbReference type="PANTHER" id="PTHR33695:SF1">
    <property type="entry name" value="LIPOPROTEIN SIGNAL PEPTIDASE"/>
    <property type="match status" value="1"/>
</dbReference>
<dbReference type="Pfam" id="PF01252">
    <property type="entry name" value="Peptidase_A8"/>
    <property type="match status" value="1"/>
</dbReference>
<dbReference type="PRINTS" id="PR00781">
    <property type="entry name" value="LIPOSIGPTASE"/>
</dbReference>
<comment type="function">
    <text evidence="1">This protein specifically catalyzes the removal of signal peptides from prolipoproteins.</text>
</comment>
<comment type="catalytic activity">
    <reaction evidence="1">
        <text>Release of signal peptides from bacterial membrane prolipoproteins. Hydrolyzes -Xaa-Yaa-Zaa-|-(S,diacylglyceryl)Cys-, in which Xaa is hydrophobic (preferably Leu), and Yaa (Ala or Ser) and Zaa (Gly or Ala) have small, neutral side chains.</text>
        <dbReference type="EC" id="3.4.23.36"/>
    </reaction>
</comment>
<comment type="pathway">
    <text evidence="1">Protein modification; lipoprotein biosynthesis (signal peptide cleavage).</text>
</comment>
<comment type="subcellular location">
    <subcellularLocation>
        <location evidence="1">Cell inner membrane</location>
        <topology evidence="1">Multi-pass membrane protein</topology>
    </subcellularLocation>
</comment>
<comment type="similarity">
    <text evidence="1">Belongs to the peptidase A8 family.</text>
</comment>
<name>LSPA_CYAP4</name>
<proteinExistence type="inferred from homology"/>
<sequence length="173" mass="19191">MNFKNTFFWFTALLSLLLDHLTKLWVVKNFALTVPPQTIPLWPGVFHLTYVTNTGAAFSLFSQGGEWLRWLSLGVSVGLMALAILGPNFNRWEQAGYGFLLGGAAGNGIDRFVAGRVVDFLDFRLIGFPIFNLADVFINIGIICLLIAAWGPLPSRRRAERRPSSPPPSDKLP</sequence>
<accession>B8HXG1</accession>
<keyword id="KW-0064">Aspartyl protease</keyword>
<keyword id="KW-0997">Cell inner membrane</keyword>
<keyword id="KW-1003">Cell membrane</keyword>
<keyword id="KW-0378">Hydrolase</keyword>
<keyword id="KW-0472">Membrane</keyword>
<keyword id="KW-0645">Protease</keyword>
<keyword id="KW-0812">Transmembrane</keyword>
<keyword id="KW-1133">Transmembrane helix</keyword>
<gene>
    <name evidence="1" type="primary">lspA</name>
    <name type="ordered locus">Cyan7425_4193</name>
</gene>
<evidence type="ECO:0000255" key="1">
    <source>
        <dbReference type="HAMAP-Rule" id="MF_00161"/>
    </source>
</evidence>
<organism>
    <name type="scientific">Cyanothece sp. (strain PCC 7425 / ATCC 29141)</name>
    <dbReference type="NCBI Taxonomy" id="395961"/>
    <lineage>
        <taxon>Bacteria</taxon>
        <taxon>Bacillati</taxon>
        <taxon>Cyanobacteriota</taxon>
        <taxon>Cyanophyceae</taxon>
        <taxon>Gomontiellales</taxon>
        <taxon>Cyanothecaceae</taxon>
        <taxon>Cyanothece</taxon>
    </lineage>
</organism>